<reference key="1">
    <citation type="journal article" date="2011" name="J. Bacteriol.">
        <title>Comparative genomics of 28 Salmonella enterica isolates: evidence for CRISPR-mediated adaptive sublineage evolution.</title>
        <authorList>
            <person name="Fricke W.F."/>
            <person name="Mammel M.K."/>
            <person name="McDermott P.F."/>
            <person name="Tartera C."/>
            <person name="White D.G."/>
            <person name="Leclerc J.E."/>
            <person name="Ravel J."/>
            <person name="Cebula T.A."/>
        </authorList>
    </citation>
    <scope>NUCLEOTIDE SEQUENCE [LARGE SCALE GENOMIC DNA]</scope>
    <source>
        <strain>SL254</strain>
    </source>
</reference>
<sequence>MAKNYYDITLALSGICQSARLVQQLAHQGHCDADALHVSLNSVIDMNPSSTLGVFGGSEANLRLGLETLLGVLNASSRQGLNAELTRYTLSLMVLERKLSSAKGALNTLGDRINGLQRQLDHFDLQSDTLMSAMAGIYVDVISPLGPRIQVTGSPAVLQSPQVQAKVRASLLAGIRAAVLWHQVGGGRLQLMFSRHRLTTQAKQILAHLTPEL</sequence>
<accession>B4T3S2</accession>
<comment type="subcellular location">
    <subcellularLocation>
        <location>Cytoplasm</location>
    </subcellularLocation>
    <subcellularLocation>
        <location evidence="1">Cell inner membrane</location>
        <topology evidence="1">Peripheral membrane protein</topology>
        <orientation evidence="1">Cytoplasmic side</orientation>
    </subcellularLocation>
</comment>
<comment type="similarity">
    <text evidence="1">Belongs to the HflD family.</text>
</comment>
<proteinExistence type="inferred from homology"/>
<protein>
    <recommendedName>
        <fullName evidence="1">High frequency lysogenization protein HflD homolog</fullName>
    </recommendedName>
</protein>
<organism>
    <name type="scientific">Salmonella newport (strain SL254)</name>
    <dbReference type="NCBI Taxonomy" id="423368"/>
    <lineage>
        <taxon>Bacteria</taxon>
        <taxon>Pseudomonadati</taxon>
        <taxon>Pseudomonadota</taxon>
        <taxon>Gammaproteobacteria</taxon>
        <taxon>Enterobacterales</taxon>
        <taxon>Enterobacteriaceae</taxon>
        <taxon>Salmonella</taxon>
    </lineage>
</organism>
<keyword id="KW-0997">Cell inner membrane</keyword>
<keyword id="KW-1003">Cell membrane</keyword>
<keyword id="KW-0175">Coiled coil</keyword>
<keyword id="KW-0963">Cytoplasm</keyword>
<keyword id="KW-0472">Membrane</keyword>
<evidence type="ECO:0000255" key="1">
    <source>
        <dbReference type="HAMAP-Rule" id="MF_00695"/>
    </source>
</evidence>
<dbReference type="EMBL" id="CP001113">
    <property type="protein sequence ID" value="ACF61995.1"/>
    <property type="molecule type" value="Genomic_DNA"/>
</dbReference>
<dbReference type="RefSeq" id="WP_001519653.1">
    <property type="nucleotide sequence ID" value="NZ_CCMR01000003.1"/>
</dbReference>
<dbReference type="SMR" id="B4T3S2"/>
<dbReference type="KEGG" id="see:SNSL254_A1334"/>
<dbReference type="HOGENOM" id="CLU_098920_0_0_6"/>
<dbReference type="Proteomes" id="UP000008824">
    <property type="component" value="Chromosome"/>
</dbReference>
<dbReference type="GO" id="GO:0005737">
    <property type="term" value="C:cytoplasm"/>
    <property type="evidence" value="ECO:0007669"/>
    <property type="project" value="UniProtKB-SubCell"/>
</dbReference>
<dbReference type="GO" id="GO:0005886">
    <property type="term" value="C:plasma membrane"/>
    <property type="evidence" value="ECO:0007669"/>
    <property type="project" value="UniProtKB-SubCell"/>
</dbReference>
<dbReference type="FunFam" id="1.10.3890.10:FF:000001">
    <property type="entry name" value="High frequency lysogenization protein HflD homolog"/>
    <property type="match status" value="1"/>
</dbReference>
<dbReference type="Gene3D" id="1.10.3890.10">
    <property type="entry name" value="HflD-like"/>
    <property type="match status" value="1"/>
</dbReference>
<dbReference type="HAMAP" id="MF_00695">
    <property type="entry name" value="HflD_protein"/>
    <property type="match status" value="1"/>
</dbReference>
<dbReference type="InterPro" id="IPR007451">
    <property type="entry name" value="HflD"/>
</dbReference>
<dbReference type="InterPro" id="IPR035932">
    <property type="entry name" value="HflD-like_sf"/>
</dbReference>
<dbReference type="NCBIfam" id="NF001245">
    <property type="entry name" value="PRK00218.1-1"/>
    <property type="match status" value="1"/>
</dbReference>
<dbReference type="NCBIfam" id="NF001246">
    <property type="entry name" value="PRK00218.1-2"/>
    <property type="match status" value="1"/>
</dbReference>
<dbReference type="NCBIfam" id="NF001248">
    <property type="entry name" value="PRK00218.1-4"/>
    <property type="match status" value="1"/>
</dbReference>
<dbReference type="NCBIfam" id="NF001249">
    <property type="entry name" value="PRK00218.1-5"/>
    <property type="match status" value="1"/>
</dbReference>
<dbReference type="PANTHER" id="PTHR38100">
    <property type="entry name" value="HIGH FREQUENCY LYSOGENIZATION PROTEIN HFLD"/>
    <property type="match status" value="1"/>
</dbReference>
<dbReference type="PANTHER" id="PTHR38100:SF1">
    <property type="entry name" value="HIGH FREQUENCY LYSOGENIZATION PROTEIN HFLD"/>
    <property type="match status" value="1"/>
</dbReference>
<dbReference type="Pfam" id="PF04356">
    <property type="entry name" value="DUF489"/>
    <property type="match status" value="1"/>
</dbReference>
<dbReference type="SUPFAM" id="SSF101322">
    <property type="entry name" value="YcfC-like"/>
    <property type="match status" value="1"/>
</dbReference>
<feature type="chain" id="PRO_1000132300" description="High frequency lysogenization protein HflD homolog">
    <location>
        <begin position="1"/>
        <end position="213"/>
    </location>
</feature>
<feature type="coiled-coil region" evidence="1">
    <location>
        <begin position="79"/>
        <end position="122"/>
    </location>
</feature>
<gene>
    <name evidence="1" type="primary">hflD</name>
    <name type="ordered locus">SNSL254_A1334</name>
</gene>
<name>HFLD_SALNS</name>